<reference key="1">
    <citation type="journal article" date="2002" name="Nature">
        <title>The genome sequence of Schizosaccharomyces pombe.</title>
        <authorList>
            <person name="Wood V."/>
            <person name="Gwilliam R."/>
            <person name="Rajandream M.A."/>
            <person name="Lyne M.H."/>
            <person name="Lyne R."/>
            <person name="Stewart A."/>
            <person name="Sgouros J.G."/>
            <person name="Peat N."/>
            <person name="Hayles J."/>
            <person name="Baker S.G."/>
            <person name="Basham D."/>
            <person name="Bowman S."/>
            <person name="Brooks K."/>
            <person name="Brown D."/>
            <person name="Brown S."/>
            <person name="Chillingworth T."/>
            <person name="Churcher C.M."/>
            <person name="Collins M."/>
            <person name="Connor R."/>
            <person name="Cronin A."/>
            <person name="Davis P."/>
            <person name="Feltwell T."/>
            <person name="Fraser A."/>
            <person name="Gentles S."/>
            <person name="Goble A."/>
            <person name="Hamlin N."/>
            <person name="Harris D.E."/>
            <person name="Hidalgo J."/>
            <person name="Hodgson G."/>
            <person name="Holroyd S."/>
            <person name="Hornsby T."/>
            <person name="Howarth S."/>
            <person name="Huckle E.J."/>
            <person name="Hunt S."/>
            <person name="Jagels K."/>
            <person name="James K.D."/>
            <person name="Jones L."/>
            <person name="Jones M."/>
            <person name="Leather S."/>
            <person name="McDonald S."/>
            <person name="McLean J."/>
            <person name="Mooney P."/>
            <person name="Moule S."/>
            <person name="Mungall K.L."/>
            <person name="Murphy L.D."/>
            <person name="Niblett D."/>
            <person name="Odell C."/>
            <person name="Oliver K."/>
            <person name="O'Neil S."/>
            <person name="Pearson D."/>
            <person name="Quail M.A."/>
            <person name="Rabbinowitsch E."/>
            <person name="Rutherford K.M."/>
            <person name="Rutter S."/>
            <person name="Saunders D."/>
            <person name="Seeger K."/>
            <person name="Sharp S."/>
            <person name="Skelton J."/>
            <person name="Simmonds M.N."/>
            <person name="Squares R."/>
            <person name="Squares S."/>
            <person name="Stevens K."/>
            <person name="Taylor K."/>
            <person name="Taylor R.G."/>
            <person name="Tivey A."/>
            <person name="Walsh S.V."/>
            <person name="Warren T."/>
            <person name="Whitehead S."/>
            <person name="Woodward J.R."/>
            <person name="Volckaert G."/>
            <person name="Aert R."/>
            <person name="Robben J."/>
            <person name="Grymonprez B."/>
            <person name="Weltjens I."/>
            <person name="Vanstreels E."/>
            <person name="Rieger M."/>
            <person name="Schaefer M."/>
            <person name="Mueller-Auer S."/>
            <person name="Gabel C."/>
            <person name="Fuchs M."/>
            <person name="Duesterhoeft A."/>
            <person name="Fritzc C."/>
            <person name="Holzer E."/>
            <person name="Moestl D."/>
            <person name="Hilbert H."/>
            <person name="Borzym K."/>
            <person name="Langer I."/>
            <person name="Beck A."/>
            <person name="Lehrach H."/>
            <person name="Reinhardt R."/>
            <person name="Pohl T.M."/>
            <person name="Eger P."/>
            <person name="Zimmermann W."/>
            <person name="Wedler H."/>
            <person name="Wambutt R."/>
            <person name="Purnelle B."/>
            <person name="Goffeau A."/>
            <person name="Cadieu E."/>
            <person name="Dreano S."/>
            <person name="Gloux S."/>
            <person name="Lelaure V."/>
            <person name="Mottier S."/>
            <person name="Galibert F."/>
            <person name="Aves S.J."/>
            <person name="Xiang Z."/>
            <person name="Hunt C."/>
            <person name="Moore K."/>
            <person name="Hurst S.M."/>
            <person name="Lucas M."/>
            <person name="Rochet M."/>
            <person name="Gaillardin C."/>
            <person name="Tallada V.A."/>
            <person name="Garzon A."/>
            <person name="Thode G."/>
            <person name="Daga R.R."/>
            <person name="Cruzado L."/>
            <person name="Jimenez J."/>
            <person name="Sanchez M."/>
            <person name="del Rey F."/>
            <person name="Benito J."/>
            <person name="Dominguez A."/>
            <person name="Revuelta J.L."/>
            <person name="Moreno S."/>
            <person name="Armstrong J."/>
            <person name="Forsburg S.L."/>
            <person name="Cerutti L."/>
            <person name="Lowe T."/>
            <person name="McCombie W.R."/>
            <person name="Paulsen I."/>
            <person name="Potashkin J."/>
            <person name="Shpakovski G.V."/>
            <person name="Ussery D."/>
            <person name="Barrell B.G."/>
            <person name="Nurse P."/>
        </authorList>
    </citation>
    <scope>NUCLEOTIDE SEQUENCE [LARGE SCALE GENOMIC DNA]</scope>
    <source>
        <strain>972 / ATCC 24843</strain>
    </source>
</reference>
<reference key="2">
    <citation type="journal article" date="2006" name="Nat. Biotechnol.">
        <title>ORFeome cloning and global analysis of protein localization in the fission yeast Schizosaccharomyces pombe.</title>
        <authorList>
            <person name="Matsuyama A."/>
            <person name="Arai R."/>
            <person name="Yashiroda Y."/>
            <person name="Shirai A."/>
            <person name="Kamata A."/>
            <person name="Sekido S."/>
            <person name="Kobayashi Y."/>
            <person name="Hashimoto A."/>
            <person name="Hamamoto M."/>
            <person name="Hiraoka Y."/>
            <person name="Horinouchi S."/>
            <person name="Yoshida M."/>
        </authorList>
    </citation>
    <scope>SUBCELLULAR LOCATION [LARGE SCALE ANALYSIS]</scope>
</reference>
<reference key="3">
    <citation type="journal article" date="2008" name="J. Proteome Res.">
        <title>Phosphoproteome analysis of fission yeast.</title>
        <authorList>
            <person name="Wilson-Grady J.T."/>
            <person name="Villen J."/>
            <person name="Gygi S.P."/>
        </authorList>
    </citation>
    <scope>PHOSPHORYLATION [LARGE SCALE ANALYSIS] AT SER-50; SER-53; THR-54; SER-55 AND SER-64</scope>
    <scope>IDENTIFICATION BY MASS SPECTROMETRY</scope>
</reference>
<keyword id="KW-0067">ATP-binding</keyword>
<keyword id="KW-0963">Cytoplasm</keyword>
<keyword id="KW-0547">Nucleotide-binding</keyword>
<keyword id="KW-0597">Phosphoprotein</keyword>
<keyword id="KW-1185">Reference proteome</keyword>
<keyword id="KW-0677">Repeat</keyword>
<feature type="chain" id="PRO_0000310286" description="Uncharacterized ABC transporter ATP-binding protein C16H5.08c">
    <location>
        <begin position="1"/>
        <end position="618"/>
    </location>
</feature>
<feature type="domain" description="ABC transporter 1" evidence="1">
    <location>
        <begin position="76"/>
        <end position="325"/>
    </location>
</feature>
<feature type="domain" description="ABC transporter 2" evidence="1">
    <location>
        <begin position="388"/>
        <end position="609"/>
    </location>
</feature>
<feature type="region of interest" description="Disordered" evidence="2">
    <location>
        <begin position="1"/>
        <end position="45"/>
    </location>
</feature>
<feature type="compositionally biased region" description="Basic and acidic residues" evidence="2">
    <location>
        <begin position="14"/>
        <end position="27"/>
    </location>
</feature>
<feature type="compositionally biased region" description="Basic and acidic residues" evidence="2">
    <location>
        <begin position="36"/>
        <end position="45"/>
    </location>
</feature>
<feature type="binding site" evidence="1">
    <location>
        <begin position="108"/>
        <end position="115"/>
    </location>
    <ligand>
        <name>ATP</name>
        <dbReference type="ChEBI" id="CHEBI:30616"/>
    </ligand>
</feature>
<feature type="binding site" evidence="1">
    <location>
        <begin position="423"/>
        <end position="430"/>
    </location>
    <ligand>
        <name>ATP</name>
        <dbReference type="ChEBI" id="CHEBI:30616"/>
    </ligand>
</feature>
<feature type="modified residue" description="Phosphoserine" evidence="4">
    <location>
        <position position="50"/>
    </location>
</feature>
<feature type="modified residue" description="Phosphoserine" evidence="4">
    <location>
        <position position="53"/>
    </location>
</feature>
<feature type="modified residue" description="Phosphothreonine" evidence="4">
    <location>
        <position position="54"/>
    </location>
</feature>
<feature type="modified residue" description="Phosphoserine" evidence="4">
    <location>
        <position position="55"/>
    </location>
</feature>
<feature type="modified residue" description="Phosphoserine" evidence="4">
    <location>
        <position position="64"/>
    </location>
</feature>
<sequence length="618" mass="69213">MSSKSASKLKREAKKAERLAAKGESVKPSKKNGTKNGKDKEVDGVTKDLSELSTSDPIFERSASGVLTSQPMSRDIKIDSYTLSFHGRLLIENATIELNHGQRYGLLGDNGSGKSTFLESVAARDVEYPEHIDSYLLNAEAEPSDVNAVDYIIQSAKDKVQKLEAEIEELSTADDVDDVLLESKYEELDDMDPSTFEAKAAMILHGLGFTQEMMAKPTKDMSGGWRMRVALSRALFIKPSLLLLDEPTNHLDLEAVVWLENYLAKYDKILVVTSHSQDFLNNVCTNIIDLTSKKQLVYYGGNFDIYMRTKEENETNQMKAYLKQQEEIAHIKKFIASAGTYANLVRQAKSKQKIIDKMEAAGLVEKPEPPRQFSFEFDEVRKLPPPIIAFNDVAFSYDGNLDHALYRDLSFGIDMDSRVAIVGKNGTGKSTLLNLITGLLIPIEGNVSRYSGLKMAKYSQHSADQLPYDKSPLEYIMDTYKPKFPERELQQWRSVLGKFGLSGLHQTSEIRTLSDGLKSRVVFAALALEQPHILLLDEPTNHLDITSIDALAKAINVWTGGVVLVSHDFRLIGQVSKELWEVKDKKVVKLDCSIEEYKKSMAKEVQSRDTTAKVKHLI</sequence>
<protein>
    <recommendedName>
        <fullName>Uncharacterized ABC transporter ATP-binding protein C16H5.08c</fullName>
    </recommendedName>
</protein>
<comment type="subcellular location">
    <subcellularLocation>
        <location evidence="3">Cytoplasm</location>
    </subcellularLocation>
</comment>
<comment type="similarity">
    <text evidence="5">Belongs to the ABC transporter superfamily.</text>
</comment>
<proteinExistence type="evidence at protein level"/>
<organism>
    <name type="scientific">Schizosaccharomyces pombe (strain 972 / ATCC 24843)</name>
    <name type="common">Fission yeast</name>
    <dbReference type="NCBI Taxonomy" id="284812"/>
    <lineage>
        <taxon>Eukaryota</taxon>
        <taxon>Fungi</taxon>
        <taxon>Dikarya</taxon>
        <taxon>Ascomycota</taxon>
        <taxon>Taphrinomycotina</taxon>
        <taxon>Schizosaccharomycetes</taxon>
        <taxon>Schizosaccharomycetales</taxon>
        <taxon>Schizosaccharomycetaceae</taxon>
        <taxon>Schizosaccharomyces</taxon>
    </lineage>
</organism>
<name>YBP8_SCHPO</name>
<accession>O42943</accession>
<gene>
    <name type="ORF">SPBC16H5.08c</name>
</gene>
<evidence type="ECO:0000255" key="1">
    <source>
        <dbReference type="PROSITE-ProRule" id="PRU00434"/>
    </source>
</evidence>
<evidence type="ECO:0000256" key="2">
    <source>
        <dbReference type="SAM" id="MobiDB-lite"/>
    </source>
</evidence>
<evidence type="ECO:0000269" key="3">
    <source>
    </source>
</evidence>
<evidence type="ECO:0000269" key="4">
    <source>
    </source>
</evidence>
<evidence type="ECO:0000305" key="5"/>
<dbReference type="EMBL" id="CU329671">
    <property type="protein sequence ID" value="CAA17906.1"/>
    <property type="molecule type" value="Genomic_DNA"/>
</dbReference>
<dbReference type="PIR" id="T39617">
    <property type="entry name" value="T39617"/>
</dbReference>
<dbReference type="RefSeq" id="NP_595939.1">
    <property type="nucleotide sequence ID" value="NM_001021847.2"/>
</dbReference>
<dbReference type="SMR" id="O42943"/>
<dbReference type="BioGRID" id="276616">
    <property type="interactions" value="10"/>
</dbReference>
<dbReference type="FunCoup" id="O42943">
    <property type="interactions" value="446"/>
</dbReference>
<dbReference type="STRING" id="284812.O42943"/>
<dbReference type="iPTMnet" id="O42943"/>
<dbReference type="PaxDb" id="4896-SPBC16H5.08c.1"/>
<dbReference type="EnsemblFungi" id="SPBC16H5.08c.1">
    <property type="protein sequence ID" value="SPBC16H5.08c.1:pep"/>
    <property type="gene ID" value="SPBC16H5.08c"/>
</dbReference>
<dbReference type="KEGG" id="spo:2540078"/>
<dbReference type="PomBase" id="SPBC16H5.08c"/>
<dbReference type="VEuPathDB" id="FungiDB:SPBC16H5.08c"/>
<dbReference type="eggNOG" id="KOG0927">
    <property type="taxonomic scope" value="Eukaryota"/>
</dbReference>
<dbReference type="HOGENOM" id="CLU_000604_36_6_1"/>
<dbReference type="InParanoid" id="O42943"/>
<dbReference type="OMA" id="DWMGQWT"/>
<dbReference type="PhylomeDB" id="O42943"/>
<dbReference type="PRO" id="PR:O42943"/>
<dbReference type="Proteomes" id="UP000002485">
    <property type="component" value="Chromosome II"/>
</dbReference>
<dbReference type="GO" id="GO:0005829">
    <property type="term" value="C:cytosol"/>
    <property type="evidence" value="ECO:0007005"/>
    <property type="project" value="PomBase"/>
</dbReference>
<dbReference type="GO" id="GO:0005524">
    <property type="term" value="F:ATP binding"/>
    <property type="evidence" value="ECO:0000318"/>
    <property type="project" value="GO_Central"/>
</dbReference>
<dbReference type="GO" id="GO:0016887">
    <property type="term" value="F:ATP hydrolysis activity"/>
    <property type="evidence" value="ECO:0000266"/>
    <property type="project" value="PomBase"/>
</dbReference>
<dbReference type="GO" id="GO:0042254">
    <property type="term" value="P:ribosome biogenesis"/>
    <property type="evidence" value="ECO:0000266"/>
    <property type="project" value="PomBase"/>
</dbReference>
<dbReference type="CDD" id="cd03221">
    <property type="entry name" value="ABCF_EF-3"/>
    <property type="match status" value="2"/>
</dbReference>
<dbReference type="FunFam" id="3.40.50.300:FF:000618">
    <property type="entry name" value="ATP-binding cassette (ABC) transporter, putative"/>
    <property type="match status" value="1"/>
</dbReference>
<dbReference type="FunFam" id="3.40.50.300:FF:000104">
    <property type="entry name" value="ATP-binding cassette sub-family F member 3"/>
    <property type="match status" value="1"/>
</dbReference>
<dbReference type="Gene3D" id="3.40.50.300">
    <property type="entry name" value="P-loop containing nucleotide triphosphate hydrolases"/>
    <property type="match status" value="2"/>
</dbReference>
<dbReference type="InterPro" id="IPR003593">
    <property type="entry name" value="AAA+_ATPase"/>
</dbReference>
<dbReference type="InterPro" id="IPR032781">
    <property type="entry name" value="ABC_tran_Xtn"/>
</dbReference>
<dbReference type="InterPro" id="IPR003439">
    <property type="entry name" value="ABC_transporter-like_ATP-bd"/>
</dbReference>
<dbReference type="InterPro" id="IPR017871">
    <property type="entry name" value="ABC_transporter-like_CS"/>
</dbReference>
<dbReference type="InterPro" id="IPR050611">
    <property type="entry name" value="ABCF_EF3_subfamily"/>
</dbReference>
<dbReference type="InterPro" id="IPR027417">
    <property type="entry name" value="P-loop_NTPase"/>
</dbReference>
<dbReference type="PANTHER" id="PTHR19211:SF15">
    <property type="entry name" value="ATP-BINDING CASSETTE SUB-FAMILY F MEMBER 2"/>
    <property type="match status" value="1"/>
</dbReference>
<dbReference type="PANTHER" id="PTHR19211">
    <property type="entry name" value="ATP-BINDING TRANSPORT PROTEIN-RELATED"/>
    <property type="match status" value="1"/>
</dbReference>
<dbReference type="Pfam" id="PF00005">
    <property type="entry name" value="ABC_tran"/>
    <property type="match status" value="2"/>
</dbReference>
<dbReference type="Pfam" id="PF12848">
    <property type="entry name" value="ABC_tran_Xtn"/>
    <property type="match status" value="1"/>
</dbReference>
<dbReference type="SMART" id="SM00382">
    <property type="entry name" value="AAA"/>
    <property type="match status" value="2"/>
</dbReference>
<dbReference type="SUPFAM" id="SSF52540">
    <property type="entry name" value="P-loop containing nucleoside triphosphate hydrolases"/>
    <property type="match status" value="2"/>
</dbReference>
<dbReference type="PROSITE" id="PS00211">
    <property type="entry name" value="ABC_TRANSPORTER_1"/>
    <property type="match status" value="1"/>
</dbReference>
<dbReference type="PROSITE" id="PS50893">
    <property type="entry name" value="ABC_TRANSPORTER_2"/>
    <property type="match status" value="2"/>
</dbReference>